<dbReference type="EMBL" id="CP000941">
    <property type="protein sequence ID" value="ACA11497.1"/>
    <property type="molecule type" value="Genomic_DNA"/>
</dbReference>
<dbReference type="RefSeq" id="WP_004085641.1">
    <property type="nucleotide sequence ID" value="NC_010513.1"/>
</dbReference>
<dbReference type="SMR" id="B0U5A1"/>
<dbReference type="KEGG" id="xfm:Xfasm12_0488"/>
<dbReference type="HOGENOM" id="CLU_085114_3_0_6"/>
<dbReference type="GO" id="GO:0005886">
    <property type="term" value="C:plasma membrane"/>
    <property type="evidence" value="ECO:0007669"/>
    <property type="project" value="UniProtKB-SubCell"/>
</dbReference>
<dbReference type="GO" id="GO:0045259">
    <property type="term" value="C:proton-transporting ATP synthase complex"/>
    <property type="evidence" value="ECO:0007669"/>
    <property type="project" value="UniProtKB-KW"/>
</dbReference>
<dbReference type="GO" id="GO:0046933">
    <property type="term" value="F:proton-transporting ATP synthase activity, rotational mechanism"/>
    <property type="evidence" value="ECO:0007669"/>
    <property type="project" value="UniProtKB-UniRule"/>
</dbReference>
<dbReference type="Gene3D" id="1.10.520.20">
    <property type="entry name" value="N-terminal domain of the delta subunit of the F1F0-ATP synthase"/>
    <property type="match status" value="1"/>
</dbReference>
<dbReference type="HAMAP" id="MF_01416">
    <property type="entry name" value="ATP_synth_delta_bact"/>
    <property type="match status" value="1"/>
</dbReference>
<dbReference type="InterPro" id="IPR026015">
    <property type="entry name" value="ATP_synth_OSCP/delta_N_sf"/>
</dbReference>
<dbReference type="InterPro" id="IPR000711">
    <property type="entry name" value="ATPase_OSCP/dsu"/>
</dbReference>
<dbReference type="NCBIfam" id="TIGR01145">
    <property type="entry name" value="ATP_synt_delta"/>
    <property type="match status" value="1"/>
</dbReference>
<dbReference type="NCBIfam" id="NF004402">
    <property type="entry name" value="PRK05758.2-2"/>
    <property type="match status" value="1"/>
</dbReference>
<dbReference type="PANTHER" id="PTHR11910">
    <property type="entry name" value="ATP SYNTHASE DELTA CHAIN"/>
    <property type="match status" value="1"/>
</dbReference>
<dbReference type="Pfam" id="PF00213">
    <property type="entry name" value="OSCP"/>
    <property type="match status" value="1"/>
</dbReference>
<dbReference type="PRINTS" id="PR00125">
    <property type="entry name" value="ATPASEDELTA"/>
</dbReference>
<dbReference type="SUPFAM" id="SSF47928">
    <property type="entry name" value="N-terminal domain of the delta subunit of the F1F0-ATP synthase"/>
    <property type="match status" value="1"/>
</dbReference>
<name>ATPD_XYLFM</name>
<keyword id="KW-0066">ATP synthesis</keyword>
<keyword id="KW-0997">Cell inner membrane</keyword>
<keyword id="KW-1003">Cell membrane</keyword>
<keyword id="KW-0139">CF(1)</keyword>
<keyword id="KW-0375">Hydrogen ion transport</keyword>
<keyword id="KW-0406">Ion transport</keyword>
<keyword id="KW-0472">Membrane</keyword>
<keyword id="KW-0813">Transport</keyword>
<feature type="chain" id="PRO_1000184842" description="ATP synthase subunit delta">
    <location>
        <begin position="1"/>
        <end position="175"/>
    </location>
</feature>
<sequence>MSQALTLARPYARAAFAIACEKGKCMQWSQALTFSAQVANNPIAATLLSHPQLDHEQAAALLSPEGADPAYVRFLEVIAEAHRLDVLLQVAGLYEKLRAEAEHVIKAKITSAIELAPNELNNIVTALKKRFDCEIEVTTGVDHSLIGGAVIDTGNVVIDGSIKSKLTRLQASLTH</sequence>
<comment type="function">
    <text evidence="1">F(1)F(0) ATP synthase produces ATP from ADP in the presence of a proton or sodium gradient. F-type ATPases consist of two structural domains, F(1) containing the extramembraneous catalytic core and F(0) containing the membrane proton channel, linked together by a central stalk and a peripheral stalk. During catalysis, ATP synthesis in the catalytic domain of F(1) is coupled via a rotary mechanism of the central stalk subunits to proton translocation.</text>
</comment>
<comment type="function">
    <text evidence="1">This protein is part of the stalk that links CF(0) to CF(1). It either transmits conformational changes from CF(0) to CF(1) or is implicated in proton conduction.</text>
</comment>
<comment type="subunit">
    <text evidence="1">F-type ATPases have 2 components, F(1) - the catalytic core - and F(0) - the membrane proton channel. F(1) has five subunits: alpha(3), beta(3), gamma(1), delta(1), epsilon(1). F(0) has three main subunits: a(1), b(2) and c(10-14). The alpha and beta chains form an alternating ring which encloses part of the gamma chain. F(1) is attached to F(0) by a central stalk formed by the gamma and epsilon chains, while a peripheral stalk is formed by the delta and b chains.</text>
</comment>
<comment type="subcellular location">
    <subcellularLocation>
        <location evidence="1">Cell inner membrane</location>
        <topology evidence="1">Peripheral membrane protein</topology>
    </subcellularLocation>
</comment>
<comment type="similarity">
    <text evidence="1">Belongs to the ATPase delta chain family.</text>
</comment>
<proteinExistence type="inferred from homology"/>
<reference key="1">
    <citation type="journal article" date="2010" name="J. Bacteriol.">
        <title>Whole genome sequences of two Xylella fastidiosa strains (M12 and M23) causing almond leaf scorch disease in California.</title>
        <authorList>
            <person name="Chen J."/>
            <person name="Xie G."/>
            <person name="Han S."/>
            <person name="Chertkov O."/>
            <person name="Sims D."/>
            <person name="Civerolo E.L."/>
        </authorList>
    </citation>
    <scope>NUCLEOTIDE SEQUENCE [LARGE SCALE GENOMIC DNA]</scope>
    <source>
        <strain>M12</strain>
    </source>
</reference>
<accession>B0U5A1</accession>
<protein>
    <recommendedName>
        <fullName evidence="1">ATP synthase subunit delta</fullName>
    </recommendedName>
    <alternativeName>
        <fullName evidence="1">ATP synthase F(1) sector subunit delta</fullName>
    </alternativeName>
    <alternativeName>
        <fullName evidence="1">F-type ATPase subunit delta</fullName>
        <shortName evidence="1">F-ATPase subunit delta</shortName>
    </alternativeName>
</protein>
<gene>
    <name evidence="1" type="primary">atpH</name>
    <name type="ordered locus">Xfasm12_0488</name>
</gene>
<evidence type="ECO:0000255" key="1">
    <source>
        <dbReference type="HAMAP-Rule" id="MF_01416"/>
    </source>
</evidence>
<organism>
    <name type="scientific">Xylella fastidiosa (strain M12)</name>
    <dbReference type="NCBI Taxonomy" id="405440"/>
    <lineage>
        <taxon>Bacteria</taxon>
        <taxon>Pseudomonadati</taxon>
        <taxon>Pseudomonadota</taxon>
        <taxon>Gammaproteobacteria</taxon>
        <taxon>Lysobacterales</taxon>
        <taxon>Lysobacteraceae</taxon>
        <taxon>Xylella</taxon>
    </lineage>
</organism>